<comment type="function">
    <text evidence="1">Endonuclease that specifically degrades the RNA of RNA-DNA hybrids.</text>
</comment>
<comment type="catalytic activity">
    <reaction evidence="1">
        <text>Endonucleolytic cleavage to 5'-phosphomonoester.</text>
        <dbReference type="EC" id="3.1.26.4"/>
    </reaction>
</comment>
<comment type="cofactor">
    <cofactor evidence="1">
        <name>Mg(2+)</name>
        <dbReference type="ChEBI" id="CHEBI:18420"/>
    </cofactor>
    <text evidence="1">Binds 1 Mg(2+) ion per subunit. May bind a second metal ion at a regulatory site, or after substrate binding.</text>
</comment>
<comment type="subunit">
    <text evidence="1">Monomer.</text>
</comment>
<comment type="subcellular location">
    <subcellularLocation>
        <location evidence="1">Cytoplasm</location>
    </subcellularLocation>
</comment>
<comment type="similarity">
    <text evidence="1">Belongs to the RNase H family.</text>
</comment>
<protein>
    <recommendedName>
        <fullName evidence="1">Ribonuclease H</fullName>
        <shortName evidence="1">RNase H</shortName>
        <ecNumber evidence="1">3.1.26.4</ecNumber>
    </recommendedName>
</protein>
<evidence type="ECO:0000255" key="1">
    <source>
        <dbReference type="HAMAP-Rule" id="MF_00042"/>
    </source>
</evidence>
<evidence type="ECO:0000255" key="2">
    <source>
        <dbReference type="PROSITE-ProRule" id="PRU00408"/>
    </source>
</evidence>
<proteinExistence type="inferred from homology"/>
<keyword id="KW-0963">Cytoplasm</keyword>
<keyword id="KW-0255">Endonuclease</keyword>
<keyword id="KW-0378">Hydrolase</keyword>
<keyword id="KW-0460">Magnesium</keyword>
<keyword id="KW-0479">Metal-binding</keyword>
<keyword id="KW-0540">Nuclease</keyword>
<sequence length="155" mass="17613">MLKQVEIFTDGSCLGNPGPGGYGAIMRYRQHEKTFSAGYRLTTNNRMELMAAIVALEALKEHCEVVLSTDSQYVRQGITQWIHNWKKRGWKTAEKKPVKNVDLWQRLDAALGQHKIKWEWVKGHAGHPENERCDELARAAASHPTLDDVGYLPES</sequence>
<dbReference type="EC" id="3.1.26.4" evidence="1"/>
<dbReference type="EMBL" id="CP000647">
    <property type="protein sequence ID" value="ABR75683.1"/>
    <property type="molecule type" value="Genomic_DNA"/>
</dbReference>
<dbReference type="RefSeq" id="WP_002889686.1">
    <property type="nucleotide sequence ID" value="NC_009648.1"/>
</dbReference>
<dbReference type="SMR" id="A6T512"/>
<dbReference type="STRING" id="272620.KPN_00229"/>
<dbReference type="PaxDb" id="272620-KPN_00229"/>
<dbReference type="EnsemblBacteria" id="ABR75683">
    <property type="protein sequence ID" value="ABR75683"/>
    <property type="gene ID" value="KPN_00229"/>
</dbReference>
<dbReference type="KEGG" id="kpn:KPN_00229"/>
<dbReference type="HOGENOM" id="CLU_030894_6_0_6"/>
<dbReference type="Proteomes" id="UP000000265">
    <property type="component" value="Chromosome"/>
</dbReference>
<dbReference type="GO" id="GO:0005737">
    <property type="term" value="C:cytoplasm"/>
    <property type="evidence" value="ECO:0007669"/>
    <property type="project" value="UniProtKB-SubCell"/>
</dbReference>
<dbReference type="GO" id="GO:0000287">
    <property type="term" value="F:magnesium ion binding"/>
    <property type="evidence" value="ECO:0007669"/>
    <property type="project" value="UniProtKB-UniRule"/>
</dbReference>
<dbReference type="GO" id="GO:0003676">
    <property type="term" value="F:nucleic acid binding"/>
    <property type="evidence" value="ECO:0007669"/>
    <property type="project" value="InterPro"/>
</dbReference>
<dbReference type="GO" id="GO:0004523">
    <property type="term" value="F:RNA-DNA hybrid ribonuclease activity"/>
    <property type="evidence" value="ECO:0007669"/>
    <property type="project" value="UniProtKB-UniRule"/>
</dbReference>
<dbReference type="GO" id="GO:0043137">
    <property type="term" value="P:DNA replication, removal of RNA primer"/>
    <property type="evidence" value="ECO:0007669"/>
    <property type="project" value="TreeGrafter"/>
</dbReference>
<dbReference type="CDD" id="cd09278">
    <property type="entry name" value="RNase_HI_prokaryote_like"/>
    <property type="match status" value="1"/>
</dbReference>
<dbReference type="FunFam" id="3.30.420.10:FF:000008">
    <property type="entry name" value="Ribonuclease H"/>
    <property type="match status" value="1"/>
</dbReference>
<dbReference type="Gene3D" id="3.30.420.10">
    <property type="entry name" value="Ribonuclease H-like superfamily/Ribonuclease H"/>
    <property type="match status" value="1"/>
</dbReference>
<dbReference type="HAMAP" id="MF_00042">
    <property type="entry name" value="RNase_H"/>
    <property type="match status" value="1"/>
</dbReference>
<dbReference type="InterPro" id="IPR050092">
    <property type="entry name" value="RNase_H"/>
</dbReference>
<dbReference type="InterPro" id="IPR012337">
    <property type="entry name" value="RNaseH-like_sf"/>
</dbReference>
<dbReference type="InterPro" id="IPR002156">
    <property type="entry name" value="RNaseH_domain"/>
</dbReference>
<dbReference type="InterPro" id="IPR036397">
    <property type="entry name" value="RNaseH_sf"/>
</dbReference>
<dbReference type="InterPro" id="IPR022892">
    <property type="entry name" value="RNaseHI"/>
</dbReference>
<dbReference type="NCBIfam" id="NF001236">
    <property type="entry name" value="PRK00203.1"/>
    <property type="match status" value="1"/>
</dbReference>
<dbReference type="PANTHER" id="PTHR10642">
    <property type="entry name" value="RIBONUCLEASE H1"/>
    <property type="match status" value="1"/>
</dbReference>
<dbReference type="PANTHER" id="PTHR10642:SF26">
    <property type="entry name" value="RIBONUCLEASE H1"/>
    <property type="match status" value="1"/>
</dbReference>
<dbReference type="Pfam" id="PF00075">
    <property type="entry name" value="RNase_H"/>
    <property type="match status" value="1"/>
</dbReference>
<dbReference type="SUPFAM" id="SSF53098">
    <property type="entry name" value="Ribonuclease H-like"/>
    <property type="match status" value="1"/>
</dbReference>
<dbReference type="PROSITE" id="PS50879">
    <property type="entry name" value="RNASE_H_1"/>
    <property type="match status" value="1"/>
</dbReference>
<feature type="chain" id="PRO_1000074648" description="Ribonuclease H">
    <location>
        <begin position="1"/>
        <end position="155"/>
    </location>
</feature>
<feature type="domain" description="RNase H type-1" evidence="2">
    <location>
        <begin position="1"/>
        <end position="142"/>
    </location>
</feature>
<feature type="binding site" evidence="1">
    <location>
        <position position="10"/>
    </location>
    <ligand>
        <name>Mg(2+)</name>
        <dbReference type="ChEBI" id="CHEBI:18420"/>
        <label>1</label>
    </ligand>
</feature>
<feature type="binding site" evidence="1">
    <location>
        <position position="10"/>
    </location>
    <ligand>
        <name>Mg(2+)</name>
        <dbReference type="ChEBI" id="CHEBI:18420"/>
        <label>2</label>
    </ligand>
</feature>
<feature type="binding site" evidence="1">
    <location>
        <position position="48"/>
    </location>
    <ligand>
        <name>Mg(2+)</name>
        <dbReference type="ChEBI" id="CHEBI:18420"/>
        <label>1</label>
    </ligand>
</feature>
<feature type="binding site" evidence="1">
    <location>
        <position position="70"/>
    </location>
    <ligand>
        <name>Mg(2+)</name>
        <dbReference type="ChEBI" id="CHEBI:18420"/>
        <label>1</label>
    </ligand>
</feature>
<feature type="binding site" evidence="1">
    <location>
        <position position="134"/>
    </location>
    <ligand>
        <name>Mg(2+)</name>
        <dbReference type="ChEBI" id="CHEBI:18420"/>
        <label>2</label>
    </ligand>
</feature>
<organism>
    <name type="scientific">Klebsiella pneumoniae subsp. pneumoniae (strain ATCC 700721 / MGH 78578)</name>
    <dbReference type="NCBI Taxonomy" id="272620"/>
    <lineage>
        <taxon>Bacteria</taxon>
        <taxon>Pseudomonadati</taxon>
        <taxon>Pseudomonadota</taxon>
        <taxon>Gammaproteobacteria</taxon>
        <taxon>Enterobacterales</taxon>
        <taxon>Enterobacteriaceae</taxon>
        <taxon>Klebsiella/Raoultella group</taxon>
        <taxon>Klebsiella</taxon>
        <taxon>Klebsiella pneumoniae complex</taxon>
    </lineage>
</organism>
<reference key="1">
    <citation type="submission" date="2006-09" db="EMBL/GenBank/DDBJ databases">
        <authorList>
            <consortium name="The Klebsiella pneumonia Genome Sequencing Project"/>
            <person name="McClelland M."/>
            <person name="Sanderson E.K."/>
            <person name="Spieth J."/>
            <person name="Clifton W.S."/>
            <person name="Latreille P."/>
            <person name="Sabo A."/>
            <person name="Pepin K."/>
            <person name="Bhonagiri V."/>
            <person name="Porwollik S."/>
            <person name="Ali J."/>
            <person name="Wilson R.K."/>
        </authorList>
    </citation>
    <scope>NUCLEOTIDE SEQUENCE [LARGE SCALE GENOMIC DNA]</scope>
    <source>
        <strain>ATCC 700721 / MGH 78578</strain>
    </source>
</reference>
<name>RNH_KLEP7</name>
<accession>A6T512</accession>
<gene>
    <name evidence="1" type="primary">rnhA</name>
    <name type="ordered locus">KPN78578_02220</name>
    <name type="ORF">KPN_00229</name>
</gene>